<feature type="chain" id="PRO_1000007772" description="5'-nucleotidase SurE">
    <location>
        <begin position="1"/>
        <end position="249"/>
    </location>
</feature>
<feature type="binding site" evidence="1">
    <location>
        <position position="8"/>
    </location>
    <ligand>
        <name>a divalent metal cation</name>
        <dbReference type="ChEBI" id="CHEBI:60240"/>
    </ligand>
</feature>
<feature type="binding site" evidence="1">
    <location>
        <position position="9"/>
    </location>
    <ligand>
        <name>a divalent metal cation</name>
        <dbReference type="ChEBI" id="CHEBI:60240"/>
    </ligand>
</feature>
<feature type="binding site" evidence="1">
    <location>
        <position position="39"/>
    </location>
    <ligand>
        <name>a divalent metal cation</name>
        <dbReference type="ChEBI" id="CHEBI:60240"/>
    </ligand>
</feature>
<feature type="binding site" evidence="1">
    <location>
        <position position="91"/>
    </location>
    <ligand>
        <name>a divalent metal cation</name>
        <dbReference type="ChEBI" id="CHEBI:60240"/>
    </ligand>
</feature>
<sequence length="249" mass="26662">MRILIANDDGVYAPGLAALYDALADYAECTVVAPIQDMSGASSALTLDRPLHPVSMPNGFIGLNGSPTDCVHLGLNGLLEHTPDMVVSGINLGANLGDDVLYSGTVAAAIEGRFTGRPAFAFSLLSRLPDNLSTAAYIARALVEKHDRLELPPRTVLSVNVPNLPLDHIRGIQLTRLGHRSRAKPPVKQANPRGKEGYWISVAGDVEDGGPGTDFHAVMQGYVSITPLQLDRTFREAFDGLESWLENVL</sequence>
<keyword id="KW-0963">Cytoplasm</keyword>
<keyword id="KW-0378">Hydrolase</keyword>
<keyword id="KW-0479">Metal-binding</keyword>
<keyword id="KW-0547">Nucleotide-binding</keyword>
<keyword id="KW-1185">Reference proteome</keyword>
<evidence type="ECO:0000255" key="1">
    <source>
        <dbReference type="HAMAP-Rule" id="MF_00060"/>
    </source>
</evidence>
<protein>
    <recommendedName>
        <fullName evidence="1">5'-nucleotidase SurE</fullName>
        <ecNumber evidence="1">3.1.3.5</ecNumber>
    </recommendedName>
    <alternativeName>
        <fullName evidence="1">Nucleoside 5'-monophosphate phosphohydrolase</fullName>
    </alternativeName>
</protein>
<accession>A4VJV2</accession>
<comment type="function">
    <text evidence="1">Nucleotidase that shows phosphatase activity on nucleoside 5'-monophosphates.</text>
</comment>
<comment type="catalytic activity">
    <reaction evidence="1">
        <text>a ribonucleoside 5'-phosphate + H2O = a ribonucleoside + phosphate</text>
        <dbReference type="Rhea" id="RHEA:12484"/>
        <dbReference type="ChEBI" id="CHEBI:15377"/>
        <dbReference type="ChEBI" id="CHEBI:18254"/>
        <dbReference type="ChEBI" id="CHEBI:43474"/>
        <dbReference type="ChEBI" id="CHEBI:58043"/>
        <dbReference type="EC" id="3.1.3.5"/>
    </reaction>
</comment>
<comment type="cofactor">
    <cofactor evidence="1">
        <name>a divalent metal cation</name>
        <dbReference type="ChEBI" id="CHEBI:60240"/>
    </cofactor>
    <text evidence="1">Binds 1 divalent metal cation per subunit.</text>
</comment>
<comment type="subcellular location">
    <subcellularLocation>
        <location evidence="1">Cytoplasm</location>
    </subcellularLocation>
</comment>
<comment type="similarity">
    <text evidence="1">Belongs to the SurE nucleotidase family.</text>
</comment>
<name>SURE_STUS1</name>
<organism>
    <name type="scientific">Stutzerimonas stutzeri (strain A1501)</name>
    <name type="common">Pseudomonas stutzeri</name>
    <dbReference type="NCBI Taxonomy" id="379731"/>
    <lineage>
        <taxon>Bacteria</taxon>
        <taxon>Pseudomonadati</taxon>
        <taxon>Pseudomonadota</taxon>
        <taxon>Gammaproteobacteria</taxon>
        <taxon>Pseudomonadales</taxon>
        <taxon>Pseudomonadaceae</taxon>
        <taxon>Stutzerimonas</taxon>
    </lineage>
</organism>
<dbReference type="EC" id="3.1.3.5" evidence="1"/>
<dbReference type="EMBL" id="CP000304">
    <property type="protein sequence ID" value="ABP79253.1"/>
    <property type="molecule type" value="Genomic_DNA"/>
</dbReference>
<dbReference type="RefSeq" id="WP_011912731.1">
    <property type="nucleotide sequence ID" value="NC_009434.1"/>
</dbReference>
<dbReference type="SMR" id="A4VJV2"/>
<dbReference type="KEGG" id="psa:PST_1568"/>
<dbReference type="eggNOG" id="COG0496">
    <property type="taxonomic scope" value="Bacteria"/>
</dbReference>
<dbReference type="HOGENOM" id="CLU_045192_1_2_6"/>
<dbReference type="Proteomes" id="UP000000233">
    <property type="component" value="Chromosome"/>
</dbReference>
<dbReference type="GO" id="GO:0005737">
    <property type="term" value="C:cytoplasm"/>
    <property type="evidence" value="ECO:0007669"/>
    <property type="project" value="UniProtKB-SubCell"/>
</dbReference>
<dbReference type="GO" id="GO:0008254">
    <property type="term" value="F:3'-nucleotidase activity"/>
    <property type="evidence" value="ECO:0007669"/>
    <property type="project" value="TreeGrafter"/>
</dbReference>
<dbReference type="GO" id="GO:0008253">
    <property type="term" value="F:5'-nucleotidase activity"/>
    <property type="evidence" value="ECO:0007669"/>
    <property type="project" value="UniProtKB-UniRule"/>
</dbReference>
<dbReference type="GO" id="GO:0004309">
    <property type="term" value="F:exopolyphosphatase activity"/>
    <property type="evidence" value="ECO:0007669"/>
    <property type="project" value="TreeGrafter"/>
</dbReference>
<dbReference type="GO" id="GO:0046872">
    <property type="term" value="F:metal ion binding"/>
    <property type="evidence" value="ECO:0007669"/>
    <property type="project" value="UniProtKB-UniRule"/>
</dbReference>
<dbReference type="GO" id="GO:0000166">
    <property type="term" value="F:nucleotide binding"/>
    <property type="evidence" value="ECO:0007669"/>
    <property type="project" value="UniProtKB-KW"/>
</dbReference>
<dbReference type="FunFam" id="3.40.1210.10:FF:000001">
    <property type="entry name" value="5'/3'-nucleotidase SurE"/>
    <property type="match status" value="1"/>
</dbReference>
<dbReference type="Gene3D" id="3.40.1210.10">
    <property type="entry name" value="Survival protein SurE-like phosphatase/nucleotidase"/>
    <property type="match status" value="1"/>
</dbReference>
<dbReference type="HAMAP" id="MF_00060">
    <property type="entry name" value="SurE"/>
    <property type="match status" value="1"/>
</dbReference>
<dbReference type="InterPro" id="IPR030048">
    <property type="entry name" value="SurE"/>
</dbReference>
<dbReference type="InterPro" id="IPR002828">
    <property type="entry name" value="SurE-like_Pase/nucleotidase"/>
</dbReference>
<dbReference type="InterPro" id="IPR036523">
    <property type="entry name" value="SurE-like_sf"/>
</dbReference>
<dbReference type="NCBIfam" id="NF001489">
    <property type="entry name" value="PRK00346.1-3"/>
    <property type="match status" value="1"/>
</dbReference>
<dbReference type="NCBIfam" id="NF001490">
    <property type="entry name" value="PRK00346.1-4"/>
    <property type="match status" value="1"/>
</dbReference>
<dbReference type="NCBIfam" id="TIGR00087">
    <property type="entry name" value="surE"/>
    <property type="match status" value="1"/>
</dbReference>
<dbReference type="PANTHER" id="PTHR30457">
    <property type="entry name" value="5'-NUCLEOTIDASE SURE"/>
    <property type="match status" value="1"/>
</dbReference>
<dbReference type="PANTHER" id="PTHR30457:SF12">
    <property type="entry name" value="5'_3'-NUCLEOTIDASE SURE"/>
    <property type="match status" value="1"/>
</dbReference>
<dbReference type="Pfam" id="PF01975">
    <property type="entry name" value="SurE"/>
    <property type="match status" value="1"/>
</dbReference>
<dbReference type="SUPFAM" id="SSF64167">
    <property type="entry name" value="SurE-like"/>
    <property type="match status" value="1"/>
</dbReference>
<gene>
    <name evidence="1" type="primary">surE</name>
    <name type="ordered locus">PST_1568</name>
</gene>
<proteinExistence type="inferred from homology"/>
<reference key="1">
    <citation type="journal article" date="2008" name="Proc. Natl. Acad. Sci. U.S.A.">
        <title>Nitrogen fixation island and rhizosphere competence traits in the genome of root-associated Pseudomonas stutzeri A1501.</title>
        <authorList>
            <person name="Yan Y."/>
            <person name="Yang J."/>
            <person name="Dou Y."/>
            <person name="Chen M."/>
            <person name="Ping S."/>
            <person name="Peng J."/>
            <person name="Lu W."/>
            <person name="Zhang W."/>
            <person name="Yao Z."/>
            <person name="Li H."/>
            <person name="Liu W."/>
            <person name="He S."/>
            <person name="Geng L."/>
            <person name="Zhang X."/>
            <person name="Yang F."/>
            <person name="Yu H."/>
            <person name="Zhan Y."/>
            <person name="Li D."/>
            <person name="Lin Z."/>
            <person name="Wang Y."/>
            <person name="Elmerich C."/>
            <person name="Lin M."/>
            <person name="Jin Q."/>
        </authorList>
    </citation>
    <scope>NUCLEOTIDE SEQUENCE [LARGE SCALE GENOMIC DNA]</scope>
    <source>
        <strain>A1501</strain>
    </source>
</reference>